<sequence>MNQRNASMTVIGAGSYGTALAITLARNGHEVVLWGHDPEHIATLERDRCNAAFLPDVPFPDTLHLESDLATALAASRNILVVVPSHVFGEVLRQIKPLMRPDARLVWATKGLEAETGRLLQDVAREALGDQIPLAVISGPTFAKELAAGLPTAISLASTDQTFADDLQQLLHCGKSFRVYSNPDFIGVQLGGAVKNVIAIGAGMSDGIGFGANARTALITRGLAEMSRLGAALGADPATFMGMAGLGDLVLTCTDNQSRNRRFGMMLGQGMDVQSAQEKIGQVVEGYRNTKEVRELAHRFGVEMPITEEIYQVLYCGKNAREAALTLLGRARKDERSSH</sequence>
<organism>
    <name type="scientific">Escherichia coli (strain K12)</name>
    <dbReference type="NCBI Taxonomy" id="83333"/>
    <lineage>
        <taxon>Bacteria</taxon>
        <taxon>Pseudomonadati</taxon>
        <taxon>Pseudomonadota</taxon>
        <taxon>Gammaproteobacteria</taxon>
        <taxon>Enterobacterales</taxon>
        <taxon>Enterobacteriaceae</taxon>
        <taxon>Escherichia</taxon>
    </lineage>
</organism>
<accession>P0A6S7</accession>
<accession>P37606</accession>
<accession>Q2M7S2</accession>
<comment type="function">
    <text evidence="3 4 5">Catalyzes the reduction of the glycolytic intermediate dihydroxyacetone phosphate (DHAP) to sn-glycerol 3-phosphate (G3P), the key precursor for phospholipid synthesis (PubMed:28326, PubMed:355254, PubMed:4597451). Is able to use both NADPH and NADH with similar efficiency. Can also catalyze the reverse reaction in vitro (PubMed:28326).</text>
</comment>
<comment type="catalytic activity">
    <reaction evidence="2 3">
        <text>sn-glycerol 3-phosphate + NAD(+) = dihydroxyacetone phosphate + NADH + H(+)</text>
        <dbReference type="Rhea" id="RHEA:11092"/>
        <dbReference type="ChEBI" id="CHEBI:15378"/>
        <dbReference type="ChEBI" id="CHEBI:57540"/>
        <dbReference type="ChEBI" id="CHEBI:57597"/>
        <dbReference type="ChEBI" id="CHEBI:57642"/>
        <dbReference type="ChEBI" id="CHEBI:57945"/>
        <dbReference type="EC" id="1.1.1.94"/>
    </reaction>
    <physiologicalReaction direction="right-to-left" evidence="7">
        <dbReference type="Rhea" id="RHEA:11094"/>
    </physiologicalReaction>
</comment>
<comment type="catalytic activity">
    <reaction evidence="2 3 4">
        <text>sn-glycerol 3-phosphate + NADP(+) = dihydroxyacetone phosphate + NADPH + H(+)</text>
        <dbReference type="Rhea" id="RHEA:11096"/>
        <dbReference type="ChEBI" id="CHEBI:15378"/>
        <dbReference type="ChEBI" id="CHEBI:57597"/>
        <dbReference type="ChEBI" id="CHEBI:57642"/>
        <dbReference type="ChEBI" id="CHEBI:57783"/>
        <dbReference type="ChEBI" id="CHEBI:58349"/>
        <dbReference type="EC" id="1.1.1.94"/>
    </reaction>
    <physiologicalReaction direction="right-to-left" evidence="7">
        <dbReference type="Rhea" id="RHEA:11098"/>
    </physiologicalReaction>
</comment>
<comment type="activity regulation">
    <text evidence="3">Is allosterically inhibited by G3P, the product of the reaction.</text>
</comment>
<comment type="biophysicochemical properties">
    <kinetics>
        <KM evidence="3">3.4 uM for NADPH</KM>
        <KM evidence="3">180 uM for dihydroxyacetone phosphate</KM>
        <KM evidence="3">165 uM for NADP(+)</KM>
        <KM evidence="3">30 uM for sn-glycerol 3-phosphate</KM>
        <Vmax evidence="3">78.0 umol/min/mg enzyme for the NADPH-dependent dihydroxyacetone phosphate reduction</Vmax>
        <Vmax evidence="3">0.47 umol/min/mg enzyme for the NADP(+)-dependent sn-glycerol 3-phosphate oxidation</Vmax>
        <text evidence="3">Essentially identical kinetic constants are found when NADH and NAD(+) are substituted for NADPH and NADP(+), respectively.</text>
    </kinetics>
    <phDependence>
        <text evidence="3">Optimum pH is 7.0-7.4. At pH 6.0 and pH 8.6, the observed maximum velocities are half the optimum velocities.</text>
    </phDependence>
</comment>
<comment type="pathway">
    <text evidence="2">Membrane lipid metabolism; glycerophospholipid metabolism.</text>
</comment>
<comment type="subunit">
    <text evidence="4">Homodimer.</text>
</comment>
<comment type="subcellular location">
    <subcellularLocation>
        <location evidence="2">Cytoplasm</location>
    </subcellularLocation>
</comment>
<comment type="similarity">
    <text evidence="2">Belongs to the NAD-dependent glycerol-3-phosphate dehydrogenase family.</text>
</comment>
<gene>
    <name evidence="2 6" type="primary">gpsA</name>
    <name type="ordered locus">b3608</name>
    <name type="ordered locus">JW3583</name>
</gene>
<protein>
    <recommendedName>
        <fullName evidence="2 8">Glycerol-3-phosphate dehydrogenase [NAD(P)+]</fullName>
        <ecNumber evidence="2 3 4">1.1.1.94</ecNumber>
    </recommendedName>
    <alternativeName>
        <fullName evidence="2 8">NAD(P)(+)-dependent glycerol-3-phosphate dehydrogenase</fullName>
    </alternativeName>
    <alternativeName>
        <fullName evidence="8">NAD(P)H-dependent dihydroxyacetone-phosphate reductase</fullName>
    </alternativeName>
</protein>
<proteinExistence type="evidence at protein level"/>
<name>GPDA_ECOLI</name>
<dbReference type="EC" id="1.1.1.94" evidence="2 3 4"/>
<dbReference type="EMBL" id="U00039">
    <property type="protein sequence ID" value="AAB18585.1"/>
    <property type="molecule type" value="Genomic_DNA"/>
</dbReference>
<dbReference type="EMBL" id="U00096">
    <property type="protein sequence ID" value="AAC76632.1"/>
    <property type="molecule type" value="Genomic_DNA"/>
</dbReference>
<dbReference type="EMBL" id="AP009048">
    <property type="protein sequence ID" value="BAE77684.1"/>
    <property type="molecule type" value="Genomic_DNA"/>
</dbReference>
<dbReference type="PIR" id="S47829">
    <property type="entry name" value="S47829"/>
</dbReference>
<dbReference type="RefSeq" id="NP_418065.1">
    <property type="nucleotide sequence ID" value="NC_000913.3"/>
</dbReference>
<dbReference type="RefSeq" id="WP_001076194.1">
    <property type="nucleotide sequence ID" value="NZ_STEB01000024.1"/>
</dbReference>
<dbReference type="SMR" id="P0A6S7"/>
<dbReference type="BioGRID" id="4261595">
    <property type="interactions" value="176"/>
</dbReference>
<dbReference type="BioGRID" id="852432">
    <property type="interactions" value="2"/>
</dbReference>
<dbReference type="DIP" id="DIP-48003N"/>
<dbReference type="FunCoup" id="P0A6S7">
    <property type="interactions" value="705"/>
</dbReference>
<dbReference type="IntAct" id="P0A6S7">
    <property type="interactions" value="6"/>
</dbReference>
<dbReference type="STRING" id="511145.b3608"/>
<dbReference type="jPOST" id="P0A6S7"/>
<dbReference type="PaxDb" id="511145-b3608"/>
<dbReference type="EnsemblBacteria" id="AAC76632">
    <property type="protein sequence ID" value="AAC76632"/>
    <property type="gene ID" value="b3608"/>
</dbReference>
<dbReference type="GeneID" id="93778322"/>
<dbReference type="GeneID" id="948125"/>
<dbReference type="KEGG" id="ecj:JW3583"/>
<dbReference type="KEGG" id="eco:b3608"/>
<dbReference type="KEGG" id="ecoc:C3026_19565"/>
<dbReference type="PATRIC" id="fig|1411691.4.peg.3098"/>
<dbReference type="EchoBASE" id="EB4142"/>
<dbReference type="eggNOG" id="COG0240">
    <property type="taxonomic scope" value="Bacteria"/>
</dbReference>
<dbReference type="HOGENOM" id="CLU_033449_0_2_6"/>
<dbReference type="InParanoid" id="P0A6S7"/>
<dbReference type="OMA" id="NRMFGNM"/>
<dbReference type="OrthoDB" id="9812273at2"/>
<dbReference type="PhylomeDB" id="P0A6S7"/>
<dbReference type="BioCyc" id="EcoCyc:GLYC3PDEHYDROGBIOSYN-MONOMER"/>
<dbReference type="BioCyc" id="MetaCyc:GLYC3PDEHYDROGBIOSYN-MONOMER"/>
<dbReference type="BRENDA" id="1.1.1.94">
    <property type="organism ID" value="2026"/>
</dbReference>
<dbReference type="UniPathway" id="UPA00940"/>
<dbReference type="PRO" id="PR:P0A6S7"/>
<dbReference type="Proteomes" id="UP000000625">
    <property type="component" value="Chromosome"/>
</dbReference>
<dbReference type="GO" id="GO:0005829">
    <property type="term" value="C:cytosol"/>
    <property type="evidence" value="ECO:0000314"/>
    <property type="project" value="EcoCyc"/>
</dbReference>
<dbReference type="GO" id="GO:0047952">
    <property type="term" value="F:glycerol-3-phosphate dehydrogenase [NAD(P)+] activity"/>
    <property type="evidence" value="ECO:0000314"/>
    <property type="project" value="EcoCyc"/>
</dbReference>
<dbReference type="GO" id="GO:0051287">
    <property type="term" value="F:NAD binding"/>
    <property type="evidence" value="ECO:0007669"/>
    <property type="project" value="InterPro"/>
</dbReference>
<dbReference type="GO" id="GO:0042803">
    <property type="term" value="F:protein homodimerization activity"/>
    <property type="evidence" value="ECO:0000314"/>
    <property type="project" value="EcoCyc"/>
</dbReference>
<dbReference type="GO" id="GO:0005975">
    <property type="term" value="P:carbohydrate metabolic process"/>
    <property type="evidence" value="ECO:0007669"/>
    <property type="project" value="InterPro"/>
</dbReference>
<dbReference type="GO" id="GO:0046167">
    <property type="term" value="P:glycerol-3-phosphate biosynthetic process"/>
    <property type="evidence" value="ECO:0007669"/>
    <property type="project" value="UniProtKB-UniRule"/>
</dbReference>
<dbReference type="GO" id="GO:0046168">
    <property type="term" value="P:glycerol-3-phosphate catabolic process"/>
    <property type="evidence" value="ECO:0007669"/>
    <property type="project" value="InterPro"/>
</dbReference>
<dbReference type="GO" id="GO:0006072">
    <property type="term" value="P:glycerol-3-phosphate metabolic process"/>
    <property type="evidence" value="ECO:0000318"/>
    <property type="project" value="GO_Central"/>
</dbReference>
<dbReference type="GO" id="GO:0046474">
    <property type="term" value="P:glycerophospholipid biosynthetic process"/>
    <property type="evidence" value="ECO:0000315"/>
    <property type="project" value="EcoCyc"/>
</dbReference>
<dbReference type="FunFam" id="1.10.1040.10:FF:000001">
    <property type="entry name" value="Glycerol-3-phosphate dehydrogenase [NAD(P)+]"/>
    <property type="match status" value="1"/>
</dbReference>
<dbReference type="FunFam" id="3.40.50.720:FF:000019">
    <property type="entry name" value="Glycerol-3-phosphate dehydrogenase [NAD(P)+]"/>
    <property type="match status" value="1"/>
</dbReference>
<dbReference type="Gene3D" id="1.10.1040.10">
    <property type="entry name" value="N-(1-d-carboxylethyl)-l-norvaline Dehydrogenase, domain 2"/>
    <property type="match status" value="1"/>
</dbReference>
<dbReference type="Gene3D" id="3.40.50.720">
    <property type="entry name" value="NAD(P)-binding Rossmann-like Domain"/>
    <property type="match status" value="1"/>
</dbReference>
<dbReference type="HAMAP" id="MF_00394">
    <property type="entry name" value="NAD_Glyc3P_dehydrog"/>
    <property type="match status" value="1"/>
</dbReference>
<dbReference type="InterPro" id="IPR008927">
    <property type="entry name" value="6-PGluconate_DH-like_C_sf"/>
</dbReference>
<dbReference type="InterPro" id="IPR013328">
    <property type="entry name" value="6PGD_dom2"/>
</dbReference>
<dbReference type="InterPro" id="IPR006168">
    <property type="entry name" value="G3P_DH_NAD-dep"/>
</dbReference>
<dbReference type="InterPro" id="IPR006109">
    <property type="entry name" value="G3P_DH_NAD-dep_C"/>
</dbReference>
<dbReference type="InterPro" id="IPR011128">
    <property type="entry name" value="G3P_DH_NAD-dep_N"/>
</dbReference>
<dbReference type="InterPro" id="IPR036291">
    <property type="entry name" value="NAD(P)-bd_dom_sf"/>
</dbReference>
<dbReference type="NCBIfam" id="NF000939">
    <property type="entry name" value="PRK00094.1-1"/>
    <property type="match status" value="1"/>
</dbReference>
<dbReference type="NCBIfam" id="NF000940">
    <property type="entry name" value="PRK00094.1-2"/>
    <property type="match status" value="1"/>
</dbReference>
<dbReference type="NCBIfam" id="NF000942">
    <property type="entry name" value="PRK00094.1-4"/>
    <property type="match status" value="1"/>
</dbReference>
<dbReference type="PANTHER" id="PTHR11728">
    <property type="entry name" value="GLYCEROL-3-PHOSPHATE DEHYDROGENASE"/>
    <property type="match status" value="1"/>
</dbReference>
<dbReference type="PANTHER" id="PTHR11728:SF1">
    <property type="entry name" value="GLYCEROL-3-PHOSPHATE DEHYDROGENASE [NAD(+)] 2, CHLOROPLASTIC"/>
    <property type="match status" value="1"/>
</dbReference>
<dbReference type="Pfam" id="PF07479">
    <property type="entry name" value="NAD_Gly3P_dh_C"/>
    <property type="match status" value="1"/>
</dbReference>
<dbReference type="Pfam" id="PF01210">
    <property type="entry name" value="NAD_Gly3P_dh_N"/>
    <property type="match status" value="1"/>
</dbReference>
<dbReference type="PIRSF" id="PIRSF000114">
    <property type="entry name" value="Glycerol-3-P_dh"/>
    <property type="match status" value="1"/>
</dbReference>
<dbReference type="PRINTS" id="PR00077">
    <property type="entry name" value="GPDHDRGNASE"/>
</dbReference>
<dbReference type="SUPFAM" id="SSF48179">
    <property type="entry name" value="6-phosphogluconate dehydrogenase C-terminal domain-like"/>
    <property type="match status" value="1"/>
</dbReference>
<dbReference type="SUPFAM" id="SSF51735">
    <property type="entry name" value="NAD(P)-binding Rossmann-fold domains"/>
    <property type="match status" value="1"/>
</dbReference>
<dbReference type="PROSITE" id="PS00957">
    <property type="entry name" value="NAD_G3PDH"/>
    <property type="match status" value="1"/>
</dbReference>
<evidence type="ECO:0000250" key="1">
    <source>
        <dbReference type="UniProtKB" id="A0A0F6AK91"/>
    </source>
</evidence>
<evidence type="ECO:0000255" key="2">
    <source>
        <dbReference type="HAMAP-Rule" id="MF_00394"/>
    </source>
</evidence>
<evidence type="ECO:0000269" key="3">
    <source>
    </source>
</evidence>
<evidence type="ECO:0000269" key="4">
    <source>
    </source>
</evidence>
<evidence type="ECO:0000269" key="5">
    <source>
    </source>
</evidence>
<evidence type="ECO:0000303" key="6">
    <source>
    </source>
</evidence>
<evidence type="ECO:0000305" key="7"/>
<evidence type="ECO:0000305" key="8">
    <source>
    </source>
</evidence>
<feature type="chain" id="PRO_0000137957" description="Glycerol-3-phosphate dehydrogenase [NAD(P)+]">
    <location>
        <begin position="1"/>
        <end position="339"/>
    </location>
</feature>
<feature type="active site" description="Proton acceptor" evidence="2">
    <location>
        <position position="195"/>
    </location>
</feature>
<feature type="binding site" evidence="1">
    <location>
        <position position="15"/>
    </location>
    <ligand>
        <name>NADPH</name>
        <dbReference type="ChEBI" id="CHEBI:57783"/>
    </ligand>
</feature>
<feature type="binding site" evidence="1">
    <location>
        <position position="16"/>
    </location>
    <ligand>
        <name>NADPH</name>
        <dbReference type="ChEBI" id="CHEBI:57783"/>
    </ligand>
</feature>
<feature type="binding site" evidence="1">
    <location>
        <position position="36"/>
    </location>
    <ligand>
        <name>NADPH</name>
        <dbReference type="ChEBI" id="CHEBI:57783"/>
    </ligand>
</feature>
<feature type="binding site" evidence="1">
    <location>
        <position position="110"/>
    </location>
    <ligand>
        <name>NADPH</name>
        <dbReference type="ChEBI" id="CHEBI:57783"/>
    </ligand>
</feature>
<feature type="binding site" evidence="1">
    <location>
        <position position="110"/>
    </location>
    <ligand>
        <name>sn-glycerol 3-phosphate</name>
        <dbReference type="ChEBI" id="CHEBI:57597"/>
    </ligand>
</feature>
<feature type="binding site" evidence="1">
    <location>
        <position position="139"/>
    </location>
    <ligand>
        <name>sn-glycerol 3-phosphate</name>
        <dbReference type="ChEBI" id="CHEBI:57597"/>
    </ligand>
</feature>
<feature type="binding site" evidence="1">
    <location>
        <position position="141"/>
    </location>
    <ligand>
        <name>sn-glycerol 3-phosphate</name>
        <dbReference type="ChEBI" id="CHEBI:57597"/>
    </ligand>
</feature>
<feature type="binding site" evidence="1">
    <location>
        <position position="143"/>
    </location>
    <ligand>
        <name>NADPH</name>
        <dbReference type="ChEBI" id="CHEBI:57783"/>
    </ligand>
</feature>
<feature type="binding site" evidence="1">
    <location>
        <position position="195"/>
    </location>
    <ligand>
        <name>sn-glycerol 3-phosphate</name>
        <dbReference type="ChEBI" id="CHEBI:57597"/>
    </ligand>
</feature>
<feature type="binding site" evidence="1">
    <location>
        <position position="248"/>
    </location>
    <ligand>
        <name>sn-glycerol 3-phosphate</name>
        <dbReference type="ChEBI" id="CHEBI:57597"/>
    </ligand>
</feature>
<feature type="binding site" evidence="1">
    <location>
        <position position="258"/>
    </location>
    <ligand>
        <name>sn-glycerol 3-phosphate</name>
        <dbReference type="ChEBI" id="CHEBI:57597"/>
    </ligand>
</feature>
<feature type="binding site" evidence="1">
    <location>
        <position position="259"/>
    </location>
    <ligand>
        <name>NADPH</name>
        <dbReference type="ChEBI" id="CHEBI:57783"/>
    </ligand>
</feature>
<feature type="binding site" evidence="1">
    <location>
        <position position="259"/>
    </location>
    <ligand>
        <name>sn-glycerol 3-phosphate</name>
        <dbReference type="ChEBI" id="CHEBI:57597"/>
    </ligand>
</feature>
<feature type="binding site" evidence="1">
    <location>
        <position position="260"/>
    </location>
    <ligand>
        <name>sn-glycerol 3-phosphate</name>
        <dbReference type="ChEBI" id="CHEBI:57597"/>
    </ligand>
</feature>
<feature type="binding site" evidence="1">
    <location>
        <position position="283"/>
    </location>
    <ligand>
        <name>NADPH</name>
        <dbReference type="ChEBI" id="CHEBI:57783"/>
    </ligand>
</feature>
<feature type="binding site" evidence="1">
    <location>
        <position position="285"/>
    </location>
    <ligand>
        <name>NADPH</name>
        <dbReference type="ChEBI" id="CHEBI:57783"/>
    </ligand>
</feature>
<reference key="1">
    <citation type="journal article" date="1994" name="Nucleic Acids Res.">
        <title>Analysis of the Escherichia coli genome. V. DNA sequence of the region from 76.0 to 81.5 minutes.</title>
        <authorList>
            <person name="Sofia H.J."/>
            <person name="Burland V."/>
            <person name="Daniels D.L."/>
            <person name="Plunkett G. III"/>
            <person name="Blattner F.R."/>
        </authorList>
    </citation>
    <scope>NUCLEOTIDE SEQUENCE [LARGE SCALE GENOMIC DNA]</scope>
    <source>
        <strain>K12 / MG1655 / ATCC 47076</strain>
    </source>
</reference>
<reference key="2">
    <citation type="journal article" date="1997" name="Science">
        <title>The complete genome sequence of Escherichia coli K-12.</title>
        <authorList>
            <person name="Blattner F.R."/>
            <person name="Plunkett G. III"/>
            <person name="Bloch C.A."/>
            <person name="Perna N.T."/>
            <person name="Burland V."/>
            <person name="Riley M."/>
            <person name="Collado-Vides J."/>
            <person name="Glasner J.D."/>
            <person name="Rode C.K."/>
            <person name="Mayhew G.F."/>
            <person name="Gregor J."/>
            <person name="Davis N.W."/>
            <person name="Kirkpatrick H.A."/>
            <person name="Goeden M.A."/>
            <person name="Rose D.J."/>
            <person name="Mau B."/>
            <person name="Shao Y."/>
        </authorList>
    </citation>
    <scope>NUCLEOTIDE SEQUENCE [LARGE SCALE GENOMIC DNA]</scope>
    <source>
        <strain>K12 / MG1655 / ATCC 47076</strain>
    </source>
</reference>
<reference key="3">
    <citation type="journal article" date="2006" name="Mol. Syst. Biol.">
        <title>Highly accurate genome sequences of Escherichia coli K-12 strains MG1655 and W3110.</title>
        <authorList>
            <person name="Hayashi K."/>
            <person name="Morooka N."/>
            <person name="Yamamoto Y."/>
            <person name="Fujita K."/>
            <person name="Isono K."/>
            <person name="Choi S."/>
            <person name="Ohtsubo E."/>
            <person name="Baba T."/>
            <person name="Wanner B.L."/>
            <person name="Mori H."/>
            <person name="Horiuchi T."/>
        </authorList>
    </citation>
    <scope>NUCLEOTIDE SEQUENCE [LARGE SCALE GENOMIC DNA]</scope>
    <source>
        <strain>K12 / W3110 / ATCC 27325 / DSM 5911</strain>
    </source>
</reference>
<reference key="4">
    <citation type="journal article" date="1974" name="J. Bacteriol.">
        <title>Mutants of Escherichia coli defective in membrane phospholipid synthesis: mapping of the structural gene for L-glycerol 3-phosphate dehydrogenase.</title>
        <authorList>
            <person name="Cronan J.E. Jr."/>
            <person name="Bell R.M."/>
        </authorList>
    </citation>
    <scope>IDENTIFICATION</scope>
    <scope>FUNCTION</scope>
    <source>
        <strain>K12</strain>
    </source>
</reference>
<reference key="5">
    <citation type="journal article" date="1978" name="J. Biol. Chem.">
        <title>Biosynthesis in Escherichia coli of sn-glycerol 3-phosphate, a precursor of phospholipid.</title>
        <authorList>
            <person name="Edgar J.R."/>
            <person name="Bell R.M."/>
        </authorList>
    </citation>
    <scope>FUNCTION</scope>
    <scope>CATALYTIC ACTIVITY</scope>
    <scope>SUBUNIT</scope>
</reference>
<reference key="6">
    <citation type="journal article" date="1978" name="J. Biol. Chem.">
        <title>Biosynthesis in Escherichia coli of sn-glycerol 3-phosphate, a precursor of phospholipid. Kinetic characterization of wild type and feedback-resistant forms of the biosynthetic sn-glycerol-3-phosphate dehydrogenase.</title>
        <authorList>
            <person name="Edgar J.R."/>
            <person name="Bell R.M."/>
        </authorList>
    </citation>
    <scope>FUNCTION</scope>
    <scope>CATALYTIC ACTIVITY</scope>
    <scope>BIOPHYSICOCHEMICAL PROPERTIES</scope>
    <scope>ACTIVITY REGULATION</scope>
</reference>
<keyword id="KW-0963">Cytoplasm</keyword>
<keyword id="KW-0444">Lipid biosynthesis</keyword>
<keyword id="KW-0443">Lipid metabolism</keyword>
<keyword id="KW-0520">NAD</keyword>
<keyword id="KW-0521">NADP</keyword>
<keyword id="KW-0560">Oxidoreductase</keyword>
<keyword id="KW-0594">Phospholipid biosynthesis</keyword>
<keyword id="KW-1208">Phospholipid metabolism</keyword>
<keyword id="KW-1185">Reference proteome</keyword>